<comment type="subcellular location">
    <subcellularLocation>
        <location>Plastid</location>
        <location>Chloroplast</location>
    </subcellularLocation>
</comment>
<comment type="similarity">
    <text evidence="1">Belongs to the bacterial ribosomal protein bL33 family.</text>
</comment>
<geneLocation type="chloroplast"/>
<keyword id="KW-0150">Chloroplast</keyword>
<keyword id="KW-0934">Plastid</keyword>
<keyword id="KW-0687">Ribonucleoprotein</keyword>
<keyword id="KW-0689">Ribosomal protein</keyword>
<accession>A4QKV2</accession>
<name>RK33_CRUWA</name>
<evidence type="ECO:0000255" key="1">
    <source>
        <dbReference type="HAMAP-Rule" id="MF_00294"/>
    </source>
</evidence>
<evidence type="ECO:0000305" key="2"/>
<dbReference type="EMBL" id="AP009372">
    <property type="protein sequence ID" value="BAF50307.1"/>
    <property type="molecule type" value="Genomic_DNA"/>
</dbReference>
<dbReference type="RefSeq" id="YP_001123483.1">
    <property type="nucleotide sequence ID" value="NC_009271.1"/>
</dbReference>
<dbReference type="GeneID" id="4962660"/>
<dbReference type="GO" id="GO:0009507">
    <property type="term" value="C:chloroplast"/>
    <property type="evidence" value="ECO:0007669"/>
    <property type="project" value="UniProtKB-SubCell"/>
</dbReference>
<dbReference type="GO" id="GO:1990904">
    <property type="term" value="C:ribonucleoprotein complex"/>
    <property type="evidence" value="ECO:0007669"/>
    <property type="project" value="UniProtKB-KW"/>
</dbReference>
<dbReference type="GO" id="GO:0005840">
    <property type="term" value="C:ribosome"/>
    <property type="evidence" value="ECO:0007669"/>
    <property type="project" value="UniProtKB-KW"/>
</dbReference>
<dbReference type="GO" id="GO:0003735">
    <property type="term" value="F:structural constituent of ribosome"/>
    <property type="evidence" value="ECO:0007669"/>
    <property type="project" value="InterPro"/>
</dbReference>
<dbReference type="GO" id="GO:0006412">
    <property type="term" value="P:translation"/>
    <property type="evidence" value="ECO:0007669"/>
    <property type="project" value="UniProtKB-UniRule"/>
</dbReference>
<dbReference type="FunFam" id="2.20.28.120:FF:000004">
    <property type="entry name" value="50S ribosomal protein L33, chloroplastic"/>
    <property type="match status" value="1"/>
</dbReference>
<dbReference type="Gene3D" id="2.20.28.120">
    <property type="entry name" value="Ribosomal protein L33"/>
    <property type="match status" value="1"/>
</dbReference>
<dbReference type="HAMAP" id="MF_00294">
    <property type="entry name" value="Ribosomal_bL33"/>
    <property type="match status" value="1"/>
</dbReference>
<dbReference type="InterPro" id="IPR001705">
    <property type="entry name" value="Ribosomal_bL33"/>
</dbReference>
<dbReference type="InterPro" id="IPR018264">
    <property type="entry name" value="Ribosomal_bL33_CS"/>
</dbReference>
<dbReference type="InterPro" id="IPR038584">
    <property type="entry name" value="Ribosomal_bL33_sf"/>
</dbReference>
<dbReference type="InterPro" id="IPR011332">
    <property type="entry name" value="Ribosomal_zn-bd"/>
</dbReference>
<dbReference type="NCBIfam" id="NF001764">
    <property type="entry name" value="PRK00504.1"/>
    <property type="match status" value="1"/>
</dbReference>
<dbReference type="NCBIfam" id="NF001860">
    <property type="entry name" value="PRK00595.1"/>
    <property type="match status" value="1"/>
</dbReference>
<dbReference type="NCBIfam" id="TIGR01023">
    <property type="entry name" value="rpmG_bact"/>
    <property type="match status" value="1"/>
</dbReference>
<dbReference type="PANTHER" id="PTHR43168">
    <property type="entry name" value="50S RIBOSOMAL PROTEIN L33, CHLOROPLASTIC"/>
    <property type="match status" value="1"/>
</dbReference>
<dbReference type="PANTHER" id="PTHR43168:SF2">
    <property type="entry name" value="LARGE RIBOSOMAL SUBUNIT PROTEIN BL33C"/>
    <property type="match status" value="1"/>
</dbReference>
<dbReference type="Pfam" id="PF00471">
    <property type="entry name" value="Ribosomal_L33"/>
    <property type="match status" value="1"/>
</dbReference>
<dbReference type="SUPFAM" id="SSF57829">
    <property type="entry name" value="Zn-binding ribosomal proteins"/>
    <property type="match status" value="1"/>
</dbReference>
<dbReference type="PROSITE" id="PS00582">
    <property type="entry name" value="RIBOSOMAL_L33"/>
    <property type="match status" value="1"/>
</dbReference>
<sequence>MAKGKDVRVTIILECTSCVRNDIKKESAGISRYITQKNRHNTPSRLELRKFCPYCYKHTIHGEIKK</sequence>
<protein>
    <recommendedName>
        <fullName evidence="1">Large ribosomal subunit protein bL33c</fullName>
    </recommendedName>
    <alternativeName>
        <fullName evidence="2">50S ribosomal protein L33, chloroplastic</fullName>
    </alternativeName>
</protein>
<organism>
    <name type="scientific">Crucihimalaya wallichii</name>
    <name type="common">Rock-cress</name>
    <name type="synonym">Arabidopsis campestris</name>
    <dbReference type="NCBI Taxonomy" id="78192"/>
    <lineage>
        <taxon>Eukaryota</taxon>
        <taxon>Viridiplantae</taxon>
        <taxon>Streptophyta</taxon>
        <taxon>Embryophyta</taxon>
        <taxon>Tracheophyta</taxon>
        <taxon>Spermatophyta</taxon>
        <taxon>Magnoliopsida</taxon>
        <taxon>eudicotyledons</taxon>
        <taxon>Gunneridae</taxon>
        <taxon>Pentapetalae</taxon>
        <taxon>rosids</taxon>
        <taxon>malvids</taxon>
        <taxon>Brassicales</taxon>
        <taxon>Brassicaceae</taxon>
        <taxon>Crucihimalayeae</taxon>
        <taxon>Crucihimalaya</taxon>
    </lineage>
</organism>
<proteinExistence type="inferred from homology"/>
<reference key="1">
    <citation type="submission" date="2007-03" db="EMBL/GenBank/DDBJ databases">
        <title>Sequencing analysis of Crucihimalaya wallichii chloroplast DNA.</title>
        <authorList>
            <person name="Hosouchi T."/>
            <person name="Tsuruoka H."/>
            <person name="Kotani H."/>
        </authorList>
    </citation>
    <scope>NUCLEOTIDE SEQUENCE [LARGE SCALE GENOMIC DNA]</scope>
</reference>
<gene>
    <name evidence="1" type="primary">rpl33</name>
</gene>
<feature type="chain" id="PRO_0000356794" description="Large ribosomal subunit protein bL33c">
    <location>
        <begin position="1"/>
        <end position="66"/>
    </location>
</feature>